<feature type="chain" id="PRO_0000206584" description="Dynamin-related protein 3A">
    <location>
        <begin position="1"/>
        <end position="808"/>
    </location>
</feature>
<feature type="domain" description="Dynamin-type G" evidence="4">
    <location>
        <begin position="56"/>
        <end position="330"/>
    </location>
</feature>
<feature type="domain" description="GED" evidence="3">
    <location>
        <begin position="670"/>
        <end position="761"/>
    </location>
</feature>
<feature type="region of interest" description="Disordered" evidence="5">
    <location>
        <begin position="1"/>
        <end position="31"/>
    </location>
</feature>
<feature type="region of interest" description="G1 motif" evidence="4">
    <location>
        <begin position="66"/>
        <end position="73"/>
    </location>
</feature>
<feature type="region of interest" description="G2 motif" evidence="4">
    <location>
        <begin position="92"/>
        <end position="94"/>
    </location>
</feature>
<feature type="region of interest" description="G3 motif" evidence="4">
    <location>
        <begin position="172"/>
        <end position="175"/>
    </location>
</feature>
<feature type="region of interest" description="G4 motif" evidence="4">
    <location>
        <begin position="241"/>
        <end position="244"/>
    </location>
</feature>
<feature type="region of interest" description="G5 motif" evidence="4">
    <location>
        <begin position="271"/>
        <end position="274"/>
    </location>
</feature>
<feature type="region of interest" description="Disordered" evidence="5">
    <location>
        <begin position="548"/>
        <end position="578"/>
    </location>
</feature>
<feature type="region of interest" description="Disordered" evidence="5">
    <location>
        <begin position="774"/>
        <end position="808"/>
    </location>
</feature>
<feature type="compositionally biased region" description="Low complexity" evidence="5">
    <location>
        <begin position="16"/>
        <end position="28"/>
    </location>
</feature>
<feature type="compositionally biased region" description="Basic and acidic residues" evidence="5">
    <location>
        <begin position="554"/>
        <end position="563"/>
    </location>
</feature>
<feature type="compositionally biased region" description="Low complexity" evidence="5">
    <location>
        <begin position="564"/>
        <end position="575"/>
    </location>
</feature>
<feature type="compositionally biased region" description="Low complexity" evidence="5">
    <location>
        <begin position="775"/>
        <end position="792"/>
    </location>
</feature>
<feature type="binding site" evidence="2">
    <location>
        <begin position="66"/>
        <end position="73"/>
    </location>
    <ligand>
        <name>GTP</name>
        <dbReference type="ChEBI" id="CHEBI:37565"/>
    </ligand>
</feature>
<feature type="binding site" evidence="1">
    <location>
        <begin position="172"/>
        <end position="176"/>
    </location>
    <ligand>
        <name>GTP</name>
        <dbReference type="ChEBI" id="CHEBI:37565"/>
    </ligand>
</feature>
<feature type="binding site" evidence="1">
    <location>
        <begin position="241"/>
        <end position="244"/>
    </location>
    <ligand>
        <name>GTP</name>
        <dbReference type="ChEBI" id="CHEBI:37565"/>
    </ligand>
</feature>
<feature type="splice variant" id="VSP_012755" description="In isoform 2." evidence="13">
    <original>ISHRCMMN</original>
    <variation>VSVFLVCC</variation>
    <location>
        <begin position="473"/>
        <end position="480"/>
    </location>
</feature>
<feature type="splice variant" id="VSP_012756" description="In isoform 2." evidence="13">
    <location>
        <begin position="481"/>
        <end position="808"/>
    </location>
</feature>
<feature type="mutagenesis site" description="In drp3a-1; elongated mitochondria." evidence="10">
    <original>R</original>
    <variation>H</variation>
    <location>
        <position position="82"/>
    </location>
</feature>
<feature type="mutagenesis site" description="In drp3a-2; elongated mitochondria." evidence="10">
    <original>A</original>
    <variation>T</variation>
    <location>
        <position position="209"/>
    </location>
</feature>
<feature type="sequence conflict" description="In Ref. 1; AAC61784." evidence="14" ref="1">
    <original>VIG</original>
    <variation>LSGR</variation>
    <location>
        <begin position="495"/>
        <end position="497"/>
    </location>
</feature>
<feature type="sequence conflict" description="In Ref. 1; AAC61784." evidence="14" ref="1">
    <original>A</original>
    <variation>T</variation>
    <location>
        <position position="509"/>
    </location>
</feature>
<feature type="sequence conflict" description="In Ref. 1; AAC61784." evidence="14" ref="1">
    <original>I</original>
    <variation>V</variation>
    <location>
        <position position="584"/>
    </location>
</feature>
<feature type="sequence conflict" description="In Ref. 1; AAC61784." evidence="14" ref="1">
    <original>S</original>
    <variation>N</variation>
    <location>
        <position position="605"/>
    </location>
</feature>
<reference key="1">
    <citation type="journal article" date="1998" name="Plant Mol. Biol.">
        <title>Molecular cloning of an Arabidopsis cDNA encoding a dynamin-like protein that is localized to plastids.</title>
        <authorList>
            <person name="Kang S.G."/>
            <person name="Jin J.B."/>
            <person name="Piao H.L."/>
            <person name="Pih K.T."/>
            <person name="Jang H.J."/>
            <person name="Lim J.H."/>
            <person name="Hwang I."/>
        </authorList>
    </citation>
    <scope>NUCLEOTIDE SEQUENCE [MRNA] (ISOFORM 1)</scope>
    <scope>TISSUE SPECIFICITY</scope>
    <source>
        <strain>cv. Columbia</strain>
    </source>
</reference>
<reference key="2">
    <citation type="journal article" date="2002" name="Proc. Natl. Acad. Sci. U.S.A.">
        <title>A dynamin-like protein (ADL2b), rather than FtsZ, is involved in Arabidopsis mitochondrial division.</title>
        <authorList>
            <person name="Arimura S."/>
            <person name="Tsutsumi N."/>
        </authorList>
    </citation>
    <scope>NUCLEOTIDE SEQUENCE [MRNA] (ISOFORM 1)</scope>
    <source>
        <strain>cv. Columbia</strain>
    </source>
</reference>
<reference key="3">
    <citation type="journal article" date="1999" name="Nature">
        <title>Sequence and analysis of chromosome 4 of the plant Arabidopsis thaliana.</title>
        <authorList>
            <person name="Mayer K.F.X."/>
            <person name="Schueller C."/>
            <person name="Wambutt R."/>
            <person name="Murphy G."/>
            <person name="Volckaert G."/>
            <person name="Pohl T."/>
            <person name="Duesterhoeft A."/>
            <person name="Stiekema W."/>
            <person name="Entian K.-D."/>
            <person name="Terryn N."/>
            <person name="Harris B."/>
            <person name="Ansorge W."/>
            <person name="Brandt P."/>
            <person name="Grivell L.A."/>
            <person name="Rieger M."/>
            <person name="Weichselgartner M."/>
            <person name="de Simone V."/>
            <person name="Obermaier B."/>
            <person name="Mache R."/>
            <person name="Mueller M."/>
            <person name="Kreis M."/>
            <person name="Delseny M."/>
            <person name="Puigdomenech P."/>
            <person name="Watson M."/>
            <person name="Schmidtheini T."/>
            <person name="Reichert B."/>
            <person name="Portetelle D."/>
            <person name="Perez-Alonso M."/>
            <person name="Boutry M."/>
            <person name="Bancroft I."/>
            <person name="Vos P."/>
            <person name="Hoheisel J."/>
            <person name="Zimmermann W."/>
            <person name="Wedler H."/>
            <person name="Ridley P."/>
            <person name="Langham S.-A."/>
            <person name="McCullagh B."/>
            <person name="Bilham L."/>
            <person name="Robben J."/>
            <person name="van der Schueren J."/>
            <person name="Grymonprez B."/>
            <person name="Chuang Y.-J."/>
            <person name="Vandenbussche F."/>
            <person name="Braeken M."/>
            <person name="Weltjens I."/>
            <person name="Voet M."/>
            <person name="Bastiaens I."/>
            <person name="Aert R."/>
            <person name="Defoor E."/>
            <person name="Weitzenegger T."/>
            <person name="Bothe G."/>
            <person name="Ramsperger U."/>
            <person name="Hilbert H."/>
            <person name="Braun M."/>
            <person name="Holzer E."/>
            <person name="Brandt A."/>
            <person name="Peters S."/>
            <person name="van Staveren M."/>
            <person name="Dirkse W."/>
            <person name="Mooijman P."/>
            <person name="Klein Lankhorst R."/>
            <person name="Rose M."/>
            <person name="Hauf J."/>
            <person name="Koetter P."/>
            <person name="Berneiser S."/>
            <person name="Hempel S."/>
            <person name="Feldpausch M."/>
            <person name="Lamberth S."/>
            <person name="Van den Daele H."/>
            <person name="De Keyser A."/>
            <person name="Buysshaert C."/>
            <person name="Gielen J."/>
            <person name="Villarroel R."/>
            <person name="De Clercq R."/>
            <person name="van Montagu M."/>
            <person name="Rogers J."/>
            <person name="Cronin A."/>
            <person name="Quail M.A."/>
            <person name="Bray-Allen S."/>
            <person name="Clark L."/>
            <person name="Doggett J."/>
            <person name="Hall S."/>
            <person name="Kay M."/>
            <person name="Lennard N."/>
            <person name="McLay K."/>
            <person name="Mayes R."/>
            <person name="Pettett A."/>
            <person name="Rajandream M.A."/>
            <person name="Lyne M."/>
            <person name="Benes V."/>
            <person name="Rechmann S."/>
            <person name="Borkova D."/>
            <person name="Bloecker H."/>
            <person name="Scharfe M."/>
            <person name="Grimm M."/>
            <person name="Loehnert T.-H."/>
            <person name="Dose S."/>
            <person name="de Haan M."/>
            <person name="Maarse A.C."/>
            <person name="Schaefer M."/>
            <person name="Mueller-Auer S."/>
            <person name="Gabel C."/>
            <person name="Fuchs M."/>
            <person name="Fartmann B."/>
            <person name="Granderath K."/>
            <person name="Dauner D."/>
            <person name="Herzl A."/>
            <person name="Neumann S."/>
            <person name="Argiriou A."/>
            <person name="Vitale D."/>
            <person name="Liguori R."/>
            <person name="Piravandi E."/>
            <person name="Massenet O."/>
            <person name="Quigley F."/>
            <person name="Clabauld G."/>
            <person name="Muendlein A."/>
            <person name="Felber R."/>
            <person name="Schnabl S."/>
            <person name="Hiller R."/>
            <person name="Schmidt W."/>
            <person name="Lecharny A."/>
            <person name="Aubourg S."/>
            <person name="Chefdor F."/>
            <person name="Cooke R."/>
            <person name="Berger C."/>
            <person name="Monfort A."/>
            <person name="Casacuberta E."/>
            <person name="Gibbons T."/>
            <person name="Weber N."/>
            <person name="Vandenbol M."/>
            <person name="Bargues M."/>
            <person name="Terol J."/>
            <person name="Torres A."/>
            <person name="Perez-Perez A."/>
            <person name="Purnelle B."/>
            <person name="Bent E."/>
            <person name="Johnson S."/>
            <person name="Tacon D."/>
            <person name="Jesse T."/>
            <person name="Heijnen L."/>
            <person name="Schwarz S."/>
            <person name="Scholler P."/>
            <person name="Heber S."/>
            <person name="Francs P."/>
            <person name="Bielke C."/>
            <person name="Frishman D."/>
            <person name="Haase D."/>
            <person name="Lemcke K."/>
            <person name="Mewes H.-W."/>
            <person name="Stocker S."/>
            <person name="Zaccaria P."/>
            <person name="Bevan M."/>
            <person name="Wilson R.K."/>
            <person name="de la Bastide M."/>
            <person name="Habermann K."/>
            <person name="Parnell L."/>
            <person name="Dedhia N."/>
            <person name="Gnoj L."/>
            <person name="Schutz K."/>
            <person name="Huang E."/>
            <person name="Spiegel L."/>
            <person name="Sekhon M."/>
            <person name="Murray J."/>
            <person name="Sheet P."/>
            <person name="Cordes M."/>
            <person name="Abu-Threideh J."/>
            <person name="Stoneking T."/>
            <person name="Kalicki J."/>
            <person name="Graves T."/>
            <person name="Harmon G."/>
            <person name="Edwards J."/>
            <person name="Latreille P."/>
            <person name="Courtney L."/>
            <person name="Cloud J."/>
            <person name="Abbott A."/>
            <person name="Scott K."/>
            <person name="Johnson D."/>
            <person name="Minx P."/>
            <person name="Bentley D."/>
            <person name="Fulton B."/>
            <person name="Miller N."/>
            <person name="Greco T."/>
            <person name="Kemp K."/>
            <person name="Kramer J."/>
            <person name="Fulton L."/>
            <person name="Mardis E."/>
            <person name="Dante M."/>
            <person name="Pepin K."/>
            <person name="Hillier L.W."/>
            <person name="Nelson J."/>
            <person name="Spieth J."/>
            <person name="Ryan E."/>
            <person name="Andrews S."/>
            <person name="Geisel C."/>
            <person name="Layman D."/>
            <person name="Du H."/>
            <person name="Ali J."/>
            <person name="Berghoff A."/>
            <person name="Jones K."/>
            <person name="Drone K."/>
            <person name="Cotton M."/>
            <person name="Joshu C."/>
            <person name="Antonoiu B."/>
            <person name="Zidanic M."/>
            <person name="Strong C."/>
            <person name="Sun H."/>
            <person name="Lamar B."/>
            <person name="Yordan C."/>
            <person name="Ma P."/>
            <person name="Zhong J."/>
            <person name="Preston R."/>
            <person name="Vil D."/>
            <person name="Shekher M."/>
            <person name="Matero A."/>
            <person name="Shah R."/>
            <person name="Swaby I.K."/>
            <person name="O'Shaughnessy A."/>
            <person name="Rodriguez M."/>
            <person name="Hoffman J."/>
            <person name="Till S."/>
            <person name="Granat S."/>
            <person name="Shohdy N."/>
            <person name="Hasegawa A."/>
            <person name="Hameed A."/>
            <person name="Lodhi M."/>
            <person name="Johnson A."/>
            <person name="Chen E."/>
            <person name="Marra M.A."/>
            <person name="Martienssen R."/>
            <person name="McCombie W.R."/>
        </authorList>
    </citation>
    <scope>NUCLEOTIDE SEQUENCE [LARGE SCALE GENOMIC DNA]</scope>
    <source>
        <strain>cv. Columbia</strain>
    </source>
</reference>
<reference key="4">
    <citation type="journal article" date="2017" name="Plant J.">
        <title>Araport11: a complete reannotation of the Arabidopsis thaliana reference genome.</title>
        <authorList>
            <person name="Cheng C.Y."/>
            <person name="Krishnakumar V."/>
            <person name="Chan A.P."/>
            <person name="Thibaud-Nissen F."/>
            <person name="Schobel S."/>
            <person name="Town C.D."/>
        </authorList>
    </citation>
    <scope>GENOME REANNOTATION</scope>
    <source>
        <strain>cv. Columbia</strain>
    </source>
</reference>
<reference key="5">
    <citation type="journal article" date="2003" name="Science">
        <title>Empirical analysis of transcriptional activity in the Arabidopsis genome.</title>
        <authorList>
            <person name="Yamada K."/>
            <person name="Lim J."/>
            <person name="Dale J.M."/>
            <person name="Chen H."/>
            <person name="Shinn P."/>
            <person name="Palm C.J."/>
            <person name="Southwick A.M."/>
            <person name="Wu H.C."/>
            <person name="Kim C.J."/>
            <person name="Nguyen M."/>
            <person name="Pham P.K."/>
            <person name="Cheuk R.F."/>
            <person name="Karlin-Newmann G."/>
            <person name="Liu S.X."/>
            <person name="Lam B."/>
            <person name="Sakano H."/>
            <person name="Wu T."/>
            <person name="Yu G."/>
            <person name="Miranda M."/>
            <person name="Quach H.L."/>
            <person name="Tripp M."/>
            <person name="Chang C.H."/>
            <person name="Lee J.M."/>
            <person name="Toriumi M.J."/>
            <person name="Chan M.M."/>
            <person name="Tang C.C."/>
            <person name="Onodera C.S."/>
            <person name="Deng J.M."/>
            <person name="Akiyama K."/>
            <person name="Ansari Y."/>
            <person name="Arakawa T."/>
            <person name="Banh J."/>
            <person name="Banno F."/>
            <person name="Bowser L."/>
            <person name="Brooks S.Y."/>
            <person name="Carninci P."/>
            <person name="Chao Q."/>
            <person name="Choy N."/>
            <person name="Enju A."/>
            <person name="Goldsmith A.D."/>
            <person name="Gurjal M."/>
            <person name="Hansen N.F."/>
            <person name="Hayashizaki Y."/>
            <person name="Johnson-Hopson C."/>
            <person name="Hsuan V.W."/>
            <person name="Iida K."/>
            <person name="Karnes M."/>
            <person name="Khan S."/>
            <person name="Koesema E."/>
            <person name="Ishida J."/>
            <person name="Jiang P.X."/>
            <person name="Jones T."/>
            <person name="Kawai J."/>
            <person name="Kamiya A."/>
            <person name="Meyers C."/>
            <person name="Nakajima M."/>
            <person name="Narusaka M."/>
            <person name="Seki M."/>
            <person name="Sakurai T."/>
            <person name="Satou M."/>
            <person name="Tamse R."/>
            <person name="Vaysberg M."/>
            <person name="Wallender E.K."/>
            <person name="Wong C."/>
            <person name="Yamamura Y."/>
            <person name="Yuan S."/>
            <person name="Shinozaki K."/>
            <person name="Davis R.W."/>
            <person name="Theologis A."/>
            <person name="Ecker J.R."/>
        </authorList>
    </citation>
    <scope>NUCLEOTIDE SEQUENCE [LARGE SCALE MRNA] (ISOFORM 2)</scope>
    <source>
        <strain>cv. Columbia</strain>
    </source>
</reference>
<reference key="6">
    <citation type="journal article" date="2003" name="Plant Mol. Biol.">
        <title>A unified nomenclature for Arabidopsis dynamin-related large GTPases based on homology and possible functions.</title>
        <authorList>
            <person name="Hong Z."/>
            <person name="Bednarek S.Y."/>
            <person name="Blumwald E."/>
            <person name="Hwang I."/>
            <person name="Jurgens G."/>
            <person name="Menzel D."/>
            <person name="Osteryoung K.W."/>
            <person name="Raikhel N.V."/>
            <person name="Shinozaki K."/>
            <person name="Tsutsumi N."/>
            <person name="Verma D.P.S."/>
        </authorList>
    </citation>
    <scope>GENE FAMILY</scope>
    <scope>NOMENCLATURE</scope>
</reference>
<reference key="7">
    <citation type="journal article" date="2004" name="J. Exp. Bot.">
        <title>ADL2a, like ADL2b, is involved in the control of higher plant mitochondrial morphology.</title>
        <authorList>
            <person name="Logan D.C."/>
            <person name="Scott I."/>
            <person name="Tobin A.K."/>
        </authorList>
    </citation>
    <scope>FUNCTION</scope>
</reference>
<reference key="8">
    <citation type="journal article" date="2004" name="Plant Cell Physiol.">
        <title>Arabidopsis dynamin-like protein 2a (ADL2a), like ADL2b, is involved in plant mitochondrial division.</title>
        <authorList>
            <person name="Arimura S."/>
            <person name="Aida G.P."/>
            <person name="Fujimoto M."/>
            <person name="Nakazono M."/>
            <person name="Tsutsumi N."/>
        </authorList>
    </citation>
    <scope>FUNCTION</scope>
    <scope>SUBCELLULAR LOCATION</scope>
</reference>
<reference key="9">
    <citation type="journal article" date="2008" name="Plant Cell">
        <title>Arabidopsis ELONGATED MITOCHONDRIA1 is required for localization of DYNAMIN-RELATED PROTEIN3A to mitochondrial fission sites.</title>
        <authorList>
            <person name="Arimura S."/>
            <person name="Fujimoto M."/>
            <person name="Doniwa Y."/>
            <person name="Kadoya N."/>
            <person name="Nakazono M."/>
            <person name="Sakamoto W."/>
            <person name="Tsutsumi N."/>
        </authorList>
    </citation>
    <scope>SUBUNIT</scope>
    <scope>INTERACTION WITH ELM1</scope>
</reference>
<reference key="10">
    <citation type="journal article" date="2008" name="Plant Cell">
        <title>Arabidopsis PEROXIN11c-e, FISSION1b, and DYNAMIN-RELATED PROTEIN3A cooperate in cell cycle-associated replication of peroxisomes.</title>
        <authorList>
            <person name="Lingard M.J."/>
            <person name="Gidda S.K."/>
            <person name="Bingham S."/>
            <person name="Rothstein S.J."/>
            <person name="Mullen R.T."/>
            <person name="Trelease R.N."/>
        </authorList>
    </citation>
    <scope>FUNCTION</scope>
    <scope>SUBCELLULAR LOCATION</scope>
</reference>
<reference key="11">
    <citation type="journal article" date="2009" name="Plant J.">
        <title>Two small protein families, DYNAMIN-RELATED PROTEIN3 and FISSION1, are required for peroxisome fission in Arabidopsis.</title>
        <authorList>
            <person name="Zhang X."/>
            <person name="Hu J."/>
        </authorList>
    </citation>
    <scope>FUNCTION</scope>
    <scope>DISRUPTION PHENOTYPE</scope>
    <scope>MUTAGENESIS OF ARG-82 AND ALA-209</scope>
</reference>
<reference key="12">
    <citation type="journal article" date="2010" name="Plant Cell">
        <title>The Arabidopsis chloroplast division protein DYNAMIN-RELATED PROTEIN5B also mediates peroxisome division.</title>
        <authorList>
            <person name="Zhang X."/>
            <person name="Hu J."/>
        </authorList>
    </citation>
    <scope>INTERACTION WITH ARC5</scope>
    <scope>SUBCELLULAR LOCATION</scope>
</reference>
<gene>
    <name type="primary">DRP3A</name>
    <name type="synonym">ADL2</name>
    <name type="synonym">ADL2A</name>
    <name type="ordered locus">At4g33650</name>
    <name type="ORF">T16L1.140</name>
</gene>
<dbReference type="EMBL" id="AF012833">
    <property type="protein sequence ID" value="AAC61784.1"/>
    <property type="molecule type" value="mRNA"/>
</dbReference>
<dbReference type="EMBL" id="AB072373">
    <property type="protein sequence ID" value="BAB85643.1"/>
    <property type="molecule type" value="mRNA"/>
</dbReference>
<dbReference type="EMBL" id="AB072374">
    <property type="protein sequence ID" value="BAB85644.1"/>
    <property type="molecule type" value="mRNA"/>
</dbReference>
<dbReference type="EMBL" id="AL031394">
    <property type="protein sequence ID" value="CAA20578.1"/>
    <property type="molecule type" value="Genomic_DNA"/>
</dbReference>
<dbReference type="EMBL" id="AL161583">
    <property type="protein sequence ID" value="CAB80082.1"/>
    <property type="molecule type" value="Genomic_DNA"/>
</dbReference>
<dbReference type="EMBL" id="CP002687">
    <property type="protein sequence ID" value="AEE86260.1"/>
    <property type="molecule type" value="Genomic_DNA"/>
</dbReference>
<dbReference type="EMBL" id="AY034905">
    <property type="protein sequence ID" value="AAK59412.1"/>
    <property type="molecule type" value="mRNA"/>
</dbReference>
<dbReference type="EMBL" id="AY063086">
    <property type="protein sequence ID" value="AAL34260.1"/>
    <property type="molecule type" value="mRNA"/>
</dbReference>
<dbReference type="PIR" id="T04982">
    <property type="entry name" value="T04982"/>
</dbReference>
<dbReference type="RefSeq" id="NP_567931.1">
    <molecule id="Q8S944-1"/>
    <property type="nucleotide sequence ID" value="NM_119521.5"/>
</dbReference>
<dbReference type="SMR" id="Q8S944"/>
<dbReference type="BioGRID" id="14788">
    <property type="interactions" value="7"/>
</dbReference>
<dbReference type="DIP" id="DIP-47338N"/>
<dbReference type="FunCoup" id="Q8S944">
    <property type="interactions" value="5032"/>
</dbReference>
<dbReference type="IntAct" id="Q8S944">
    <property type="interactions" value="2"/>
</dbReference>
<dbReference type="STRING" id="3702.Q8S944"/>
<dbReference type="GlyGen" id="Q8S944">
    <property type="glycosylation" value="2 sites"/>
</dbReference>
<dbReference type="iPTMnet" id="Q8S944"/>
<dbReference type="PaxDb" id="3702-AT4G33650.2"/>
<dbReference type="ProteomicsDB" id="224366">
    <molecule id="Q8S944-1"/>
</dbReference>
<dbReference type="EnsemblPlants" id="AT4G33650.1">
    <molecule id="Q8S944-1"/>
    <property type="protein sequence ID" value="AT4G33650.1"/>
    <property type="gene ID" value="AT4G33650"/>
</dbReference>
<dbReference type="GeneID" id="829506"/>
<dbReference type="Gramene" id="AT4G33650.1">
    <molecule id="Q8S944-1"/>
    <property type="protein sequence ID" value="AT4G33650.1"/>
    <property type="gene ID" value="AT4G33650"/>
</dbReference>
<dbReference type="KEGG" id="ath:AT4G33650"/>
<dbReference type="Araport" id="AT4G33650"/>
<dbReference type="TAIR" id="AT4G33650">
    <property type="gene designation" value="DRP3A"/>
</dbReference>
<dbReference type="eggNOG" id="KOG0446">
    <property type="taxonomic scope" value="Eukaryota"/>
</dbReference>
<dbReference type="HOGENOM" id="CLU_008964_5_0_1"/>
<dbReference type="InParanoid" id="Q8S944"/>
<dbReference type="OrthoDB" id="5061070at2759"/>
<dbReference type="PhylomeDB" id="Q8S944"/>
<dbReference type="BioCyc" id="ARA:AT4G33650-MONOMER"/>
<dbReference type="PRO" id="PR:Q8S944"/>
<dbReference type="Proteomes" id="UP000006548">
    <property type="component" value="Chromosome 4"/>
</dbReference>
<dbReference type="ExpressionAtlas" id="Q8S944">
    <property type="expression patterns" value="baseline and differential"/>
</dbReference>
<dbReference type="GO" id="GO:0005739">
    <property type="term" value="C:mitochondrion"/>
    <property type="evidence" value="ECO:0007669"/>
    <property type="project" value="UniProtKB-SubCell"/>
</dbReference>
<dbReference type="GO" id="GO:0005777">
    <property type="term" value="C:peroxisome"/>
    <property type="evidence" value="ECO:0000314"/>
    <property type="project" value="UniProtKB"/>
</dbReference>
<dbReference type="GO" id="GO:0005525">
    <property type="term" value="F:GTP binding"/>
    <property type="evidence" value="ECO:0007669"/>
    <property type="project" value="UniProtKB-KW"/>
</dbReference>
<dbReference type="GO" id="GO:0003924">
    <property type="term" value="F:GTPase activity"/>
    <property type="evidence" value="ECO:0007669"/>
    <property type="project" value="InterPro"/>
</dbReference>
<dbReference type="GO" id="GO:0042802">
    <property type="term" value="F:identical protein binding"/>
    <property type="evidence" value="ECO:0000353"/>
    <property type="project" value="IntAct"/>
</dbReference>
<dbReference type="GO" id="GO:0051301">
    <property type="term" value="P:cell division"/>
    <property type="evidence" value="ECO:0007669"/>
    <property type="project" value="UniProtKB-KW"/>
</dbReference>
<dbReference type="GO" id="GO:0007031">
    <property type="term" value="P:peroxisome organization"/>
    <property type="evidence" value="ECO:0007669"/>
    <property type="project" value="UniProtKB-KW"/>
</dbReference>
<dbReference type="CDD" id="cd08771">
    <property type="entry name" value="DLP_1"/>
    <property type="match status" value="1"/>
</dbReference>
<dbReference type="FunFam" id="1.20.120.1240:FF:000013">
    <property type="entry name" value="Dynamin-related protein 3A"/>
    <property type="match status" value="1"/>
</dbReference>
<dbReference type="FunFam" id="1.20.120.1240:FF:000018">
    <property type="entry name" value="Dynamin-related protein 3A"/>
    <property type="match status" value="1"/>
</dbReference>
<dbReference type="FunFam" id="3.40.50.300:FF:001027">
    <property type="entry name" value="dynamin-related protein 3A"/>
    <property type="match status" value="1"/>
</dbReference>
<dbReference type="Gene3D" id="1.20.120.1240">
    <property type="entry name" value="Dynamin, middle domain"/>
    <property type="match status" value="1"/>
</dbReference>
<dbReference type="Gene3D" id="3.40.50.300">
    <property type="entry name" value="P-loop containing nucleotide triphosphate hydrolases"/>
    <property type="match status" value="1"/>
</dbReference>
<dbReference type="InterPro" id="IPR022812">
    <property type="entry name" value="Dynamin"/>
</dbReference>
<dbReference type="InterPro" id="IPR001401">
    <property type="entry name" value="Dynamin_GTPase"/>
</dbReference>
<dbReference type="InterPro" id="IPR019762">
    <property type="entry name" value="Dynamin_GTPase_CS"/>
</dbReference>
<dbReference type="InterPro" id="IPR045063">
    <property type="entry name" value="Dynamin_N"/>
</dbReference>
<dbReference type="InterPro" id="IPR000375">
    <property type="entry name" value="Dynamin_stalk"/>
</dbReference>
<dbReference type="InterPro" id="IPR030381">
    <property type="entry name" value="G_DYNAMIN_dom"/>
</dbReference>
<dbReference type="InterPro" id="IPR003130">
    <property type="entry name" value="GED"/>
</dbReference>
<dbReference type="InterPro" id="IPR020850">
    <property type="entry name" value="GED_dom"/>
</dbReference>
<dbReference type="InterPro" id="IPR027417">
    <property type="entry name" value="P-loop_NTPase"/>
</dbReference>
<dbReference type="PANTHER" id="PTHR11566">
    <property type="entry name" value="DYNAMIN"/>
    <property type="match status" value="1"/>
</dbReference>
<dbReference type="PANTHER" id="PTHR11566:SF21">
    <property type="entry name" value="DYNAMIN RELATED PROTEIN 1, ISOFORM A"/>
    <property type="match status" value="1"/>
</dbReference>
<dbReference type="Pfam" id="PF01031">
    <property type="entry name" value="Dynamin_M"/>
    <property type="match status" value="1"/>
</dbReference>
<dbReference type="Pfam" id="PF00350">
    <property type="entry name" value="Dynamin_N"/>
    <property type="match status" value="1"/>
</dbReference>
<dbReference type="Pfam" id="PF02212">
    <property type="entry name" value="GED"/>
    <property type="match status" value="1"/>
</dbReference>
<dbReference type="PRINTS" id="PR00195">
    <property type="entry name" value="DYNAMIN"/>
</dbReference>
<dbReference type="SMART" id="SM00053">
    <property type="entry name" value="DYNc"/>
    <property type="match status" value="1"/>
</dbReference>
<dbReference type="SMART" id="SM00302">
    <property type="entry name" value="GED"/>
    <property type="match status" value="1"/>
</dbReference>
<dbReference type="SUPFAM" id="SSF52540">
    <property type="entry name" value="P-loop containing nucleoside triphosphate hydrolases"/>
    <property type="match status" value="1"/>
</dbReference>
<dbReference type="PROSITE" id="PS00410">
    <property type="entry name" value="G_DYNAMIN_1"/>
    <property type="match status" value="1"/>
</dbReference>
<dbReference type="PROSITE" id="PS51718">
    <property type="entry name" value="G_DYNAMIN_2"/>
    <property type="match status" value="1"/>
</dbReference>
<dbReference type="PROSITE" id="PS51388">
    <property type="entry name" value="GED"/>
    <property type="match status" value="1"/>
</dbReference>
<organism>
    <name type="scientific">Arabidopsis thaliana</name>
    <name type="common">Mouse-ear cress</name>
    <dbReference type="NCBI Taxonomy" id="3702"/>
    <lineage>
        <taxon>Eukaryota</taxon>
        <taxon>Viridiplantae</taxon>
        <taxon>Streptophyta</taxon>
        <taxon>Embryophyta</taxon>
        <taxon>Tracheophyta</taxon>
        <taxon>Spermatophyta</taxon>
        <taxon>Magnoliopsida</taxon>
        <taxon>eudicotyledons</taxon>
        <taxon>Gunneridae</taxon>
        <taxon>Pentapetalae</taxon>
        <taxon>rosids</taxon>
        <taxon>malvids</taxon>
        <taxon>Brassicales</taxon>
        <taxon>Brassicaceae</taxon>
        <taxon>Camelineae</taxon>
        <taxon>Arabidopsis</taxon>
    </lineage>
</organism>
<evidence type="ECO:0000250" key="1"/>
<evidence type="ECO:0000255" key="2"/>
<evidence type="ECO:0000255" key="3">
    <source>
        <dbReference type="PROSITE-ProRule" id="PRU00720"/>
    </source>
</evidence>
<evidence type="ECO:0000255" key="4">
    <source>
        <dbReference type="PROSITE-ProRule" id="PRU01055"/>
    </source>
</evidence>
<evidence type="ECO:0000256" key="5">
    <source>
        <dbReference type="SAM" id="MobiDB-lite"/>
    </source>
</evidence>
<evidence type="ECO:0000269" key="6">
    <source>
    </source>
</evidence>
<evidence type="ECO:0000269" key="7">
    <source>
    </source>
</evidence>
<evidence type="ECO:0000269" key="8">
    <source>
    </source>
</evidence>
<evidence type="ECO:0000269" key="9">
    <source>
    </source>
</evidence>
<evidence type="ECO:0000269" key="10">
    <source>
    </source>
</evidence>
<evidence type="ECO:0000269" key="11">
    <source>
    </source>
</evidence>
<evidence type="ECO:0000269" key="12">
    <source>
    </source>
</evidence>
<evidence type="ECO:0000303" key="13">
    <source>
    </source>
</evidence>
<evidence type="ECO:0000305" key="14"/>
<accession>Q8S944</accession>
<accession>O22403</accession>
<accession>O81882</accession>
<accession>Q94CF3</accession>
<comment type="function">
    <text evidence="6 7 8 10">Involved in the control of mitochondrial and peroxisomal division and morphology. In association with PEX11C, PEX11D, PEX11E and FIS1B, is involved in cell cycle-associated constitutive self-replication of preexisting peroxisomes.</text>
</comment>
<comment type="subunit">
    <text evidence="9 11">Homooligomer. Interacts with ARC5 on peroxisomes and ELM1 on mitochondria.</text>
</comment>
<comment type="interaction">
    <interactant intactId="EBI-2265428">
        <id>Q8S944</id>
    </interactant>
    <interactant intactId="EBI-2265428">
        <id>Q8S944</id>
        <label>DRP3A</label>
    </interactant>
    <organismsDiffer>false</organismsDiffer>
    <experiments>3</experiments>
</comment>
<comment type="interaction">
    <interactant intactId="EBI-2265428">
        <id>Q8S944</id>
    </interactant>
    <interactant intactId="EBI-2265511">
        <id>Q8LFT2</id>
        <label>DRP3B</label>
    </interactant>
    <organismsDiffer>false</organismsDiffer>
    <experiments>6</experiments>
</comment>
<comment type="interaction">
    <interactant intactId="EBI-2265428">
        <id>Q8S944</id>
    </interactant>
    <interactant intactId="EBI-5849461">
        <id>P94077</id>
        <label>LSD1</label>
    </interactant>
    <organismsDiffer>false</organismsDiffer>
    <experiments>7</experiments>
</comment>
<comment type="subcellular location">
    <subcellularLocation>
        <location evidence="7">Mitochondrion</location>
    </subcellularLocation>
    <subcellularLocation>
        <location evidence="8 11">Peroxisome</location>
    </subcellularLocation>
</comment>
<comment type="alternative products">
    <event type="alternative splicing"/>
    <isoform>
        <id>Q8S944-1</id>
        <name>1</name>
        <sequence type="displayed"/>
    </isoform>
    <isoform>
        <id>Q8S944-2</id>
        <name>2</name>
        <sequence type="described" ref="VSP_012755 VSP_012756"/>
    </isoform>
</comment>
<comment type="tissue specificity">
    <text evidence="12">Ubiquitous. Preferentially expressed in flowers.</text>
</comment>
<comment type="disruption phenotype">
    <text evidence="10">Reduced plant growth. Increase in the size of peroxisomes and decrease in the number of peroxisomes per cell. Elongated mitochondria.</text>
</comment>
<comment type="miscellaneous">
    <molecule>Isoform 2</molecule>
    <text evidence="14">May be due to an intron retention.</text>
</comment>
<comment type="similarity">
    <text evidence="4">Belongs to the TRAFAC class dynamin-like GTPase superfamily. Dynamin/Fzo/YdjA family.</text>
</comment>
<name>DRP3A_ARATH</name>
<keyword id="KW-0025">Alternative splicing</keyword>
<keyword id="KW-0131">Cell cycle</keyword>
<keyword id="KW-0132">Cell division</keyword>
<keyword id="KW-0342">GTP-binding</keyword>
<keyword id="KW-0378">Hydrolase</keyword>
<keyword id="KW-0496">Mitochondrion</keyword>
<keyword id="KW-0505">Motor protein</keyword>
<keyword id="KW-0547">Nucleotide-binding</keyword>
<keyword id="KW-0576">Peroxisome</keyword>
<keyword id="KW-0962">Peroxisome biogenesis</keyword>
<keyword id="KW-1185">Reference proteome</keyword>
<sequence>MTIEEVSGETPPSTPPSSSTPSPSSSTTNAAPLGSSVIPIVNKLQDIFAQLGSQSTIALPQVVVVGSQSSGKSSVLEALVGRDFLPRGNDICTRRPLVLQLLQTKSRANGGSDDEWGEFRHLPETRFYDFSEIRREIEAETNRLVGENKGVADTQIRLKISSPNVLNITLVDLPGITKVPVGDQPSDIEARIRTMILSYIKQDTCLILAVTPANTDLANSDALQIASIVDPDGHRTIGVITKLDIMDKGTDARKLLLGNVVPLRLGYVGVVNRCQEDILLNRTVKEALLAEEKFFRSHPVYHGLADRLGVPQLAKKLNQILVQHIKVLLPDLKSRISNALVATAKEHQSYGELTESRAGQGALLLNFLSKYCEAYSSLLEGKSEEMSTSELSGGARIHYIFQSIFVKSLEEVDPCEDLTDDDIRTAIQNATGPRSALFVPDVPFEVLVRRQISRLLDPSLQCARFIFEELIKISHRCMMNELQRFPVLRKRMDEVIGDFLREGLEPSEAMIGDIIDMEMDYINTSHPNFIGGTKAVEAAMHQVKSSRIPHPVARPKDTVEPDRTSSSTSQVKSRSFLGRQANGIVTDQGVVSADAEKAQPAANASDTRWGIPSIFRGGDTRAVTKDSLLNKPFSEAVEDMSHNLSMIYLKEPPAVLRPTETHSEQEAVEIQITKLLLRSYYDIVRKNIEDSVPKAIMHFLVNHTKRELHNVFIKKLYRENLFEEMLQEPDEIAVKRKRTQETLHVLQQAYRTLDELPLEADSVSAGMSKHQELLTSSKYSTSSSYSASPSTTRRSRRAGDQHQNGYGF</sequence>
<proteinExistence type="evidence at protein level"/>
<protein>
    <recommendedName>
        <fullName>Dynamin-related protein 3A</fullName>
    </recommendedName>
    <alternativeName>
        <fullName>Dynamin-like protein 2</fullName>
    </alternativeName>
    <alternativeName>
        <fullName>Dynamin-like protein 2a</fullName>
    </alternativeName>
</protein>